<keyword id="KW-0687">Ribonucleoprotein</keyword>
<keyword id="KW-0689">Ribosomal protein</keyword>
<dbReference type="EMBL" id="CP001344">
    <property type="protein sequence ID" value="ACL42831.1"/>
    <property type="molecule type" value="Genomic_DNA"/>
</dbReference>
<dbReference type="SMR" id="B8HT34"/>
<dbReference type="STRING" id="395961.Cyan7425_0439"/>
<dbReference type="KEGG" id="cyn:Cyan7425_0439"/>
<dbReference type="eggNOG" id="COG0335">
    <property type="taxonomic scope" value="Bacteria"/>
</dbReference>
<dbReference type="HOGENOM" id="CLU_103507_2_0_3"/>
<dbReference type="OrthoDB" id="9803541at2"/>
<dbReference type="GO" id="GO:0022625">
    <property type="term" value="C:cytosolic large ribosomal subunit"/>
    <property type="evidence" value="ECO:0007669"/>
    <property type="project" value="TreeGrafter"/>
</dbReference>
<dbReference type="GO" id="GO:0003735">
    <property type="term" value="F:structural constituent of ribosome"/>
    <property type="evidence" value="ECO:0007669"/>
    <property type="project" value="InterPro"/>
</dbReference>
<dbReference type="GO" id="GO:0006412">
    <property type="term" value="P:translation"/>
    <property type="evidence" value="ECO:0007669"/>
    <property type="project" value="UniProtKB-UniRule"/>
</dbReference>
<dbReference type="FunFam" id="2.30.30.790:FF:000001">
    <property type="entry name" value="50S ribosomal protein L19"/>
    <property type="match status" value="1"/>
</dbReference>
<dbReference type="Gene3D" id="2.30.30.790">
    <property type="match status" value="1"/>
</dbReference>
<dbReference type="HAMAP" id="MF_00402">
    <property type="entry name" value="Ribosomal_bL19"/>
    <property type="match status" value="1"/>
</dbReference>
<dbReference type="InterPro" id="IPR001857">
    <property type="entry name" value="Ribosomal_bL19"/>
</dbReference>
<dbReference type="InterPro" id="IPR018257">
    <property type="entry name" value="Ribosomal_bL19_CS"/>
</dbReference>
<dbReference type="InterPro" id="IPR038657">
    <property type="entry name" value="Ribosomal_bL19_sf"/>
</dbReference>
<dbReference type="InterPro" id="IPR008991">
    <property type="entry name" value="Translation_prot_SH3-like_sf"/>
</dbReference>
<dbReference type="NCBIfam" id="TIGR01024">
    <property type="entry name" value="rplS_bact"/>
    <property type="match status" value="1"/>
</dbReference>
<dbReference type="PANTHER" id="PTHR15680:SF9">
    <property type="entry name" value="LARGE RIBOSOMAL SUBUNIT PROTEIN BL19M"/>
    <property type="match status" value="1"/>
</dbReference>
<dbReference type="PANTHER" id="PTHR15680">
    <property type="entry name" value="RIBOSOMAL PROTEIN L19"/>
    <property type="match status" value="1"/>
</dbReference>
<dbReference type="Pfam" id="PF01245">
    <property type="entry name" value="Ribosomal_L19"/>
    <property type="match status" value="1"/>
</dbReference>
<dbReference type="PIRSF" id="PIRSF002191">
    <property type="entry name" value="Ribosomal_L19"/>
    <property type="match status" value="1"/>
</dbReference>
<dbReference type="PRINTS" id="PR00061">
    <property type="entry name" value="RIBOSOMALL19"/>
</dbReference>
<dbReference type="SUPFAM" id="SSF50104">
    <property type="entry name" value="Translation proteins SH3-like domain"/>
    <property type="match status" value="1"/>
</dbReference>
<dbReference type="PROSITE" id="PS01015">
    <property type="entry name" value="RIBOSOMAL_L19"/>
    <property type="match status" value="1"/>
</dbReference>
<feature type="chain" id="PRO_1000134567" description="Large ribosomal subunit protein bL19">
    <location>
        <begin position="1"/>
        <end position="120"/>
    </location>
</feature>
<proteinExistence type="inferred from homology"/>
<comment type="function">
    <text evidence="1">This protein is located at the 30S-50S ribosomal subunit interface and may play a role in the structure and function of the aminoacyl-tRNA binding site.</text>
</comment>
<comment type="similarity">
    <text evidence="1">Belongs to the bacterial ribosomal protein bL19 family.</text>
</comment>
<evidence type="ECO:0000255" key="1">
    <source>
        <dbReference type="HAMAP-Rule" id="MF_00402"/>
    </source>
</evidence>
<evidence type="ECO:0000305" key="2"/>
<accession>B8HT34</accession>
<reference key="1">
    <citation type="journal article" date="2011" name="MBio">
        <title>Novel metabolic attributes of the genus Cyanothece, comprising a group of unicellular nitrogen-fixing Cyanobacteria.</title>
        <authorList>
            <person name="Bandyopadhyay A."/>
            <person name="Elvitigala T."/>
            <person name="Welsh E."/>
            <person name="Stockel J."/>
            <person name="Liberton M."/>
            <person name="Min H."/>
            <person name="Sherman L.A."/>
            <person name="Pakrasi H.B."/>
        </authorList>
    </citation>
    <scope>NUCLEOTIDE SEQUENCE [LARGE SCALE GENOMIC DNA]</scope>
    <source>
        <strain>PCC 7425 / ATCC 29141</strain>
    </source>
</reference>
<name>RL19_CYAP4</name>
<protein>
    <recommendedName>
        <fullName evidence="1">Large ribosomal subunit protein bL19</fullName>
    </recommendedName>
    <alternativeName>
        <fullName evidence="2">50S ribosomal protein L19</fullName>
    </alternativeName>
</protein>
<gene>
    <name evidence="1" type="primary">rplS</name>
    <name evidence="1" type="synonym">rpl19</name>
    <name type="ordered locus">Cyan7425_0439</name>
</gene>
<sequence length="120" mass="13792">MNAQEIIRSLEAEQLKSNLPEIHVGDTVKVGVIIQEGNKERTQPYEGIVIAKRNSGINATITVRRIFQGVGVERVFLLHSPRVESIKIIKRGKVRRAKLYYLRDRVGKATRVKQRFDREL</sequence>
<organism>
    <name type="scientific">Cyanothece sp. (strain PCC 7425 / ATCC 29141)</name>
    <dbReference type="NCBI Taxonomy" id="395961"/>
    <lineage>
        <taxon>Bacteria</taxon>
        <taxon>Bacillati</taxon>
        <taxon>Cyanobacteriota</taxon>
        <taxon>Cyanophyceae</taxon>
        <taxon>Gomontiellales</taxon>
        <taxon>Cyanothecaceae</taxon>
        <taxon>Cyanothece</taxon>
    </lineage>
</organism>